<proteinExistence type="inferred from homology"/>
<evidence type="ECO:0000255" key="1">
    <source>
        <dbReference type="HAMAP-Rule" id="MF_00270"/>
    </source>
</evidence>
<evidence type="ECO:0000305" key="2"/>
<reference key="1">
    <citation type="journal article" date="2008" name="PLoS Genet.">
        <title>Complete genome sequence of the N2-fixing broad host range endophyte Klebsiella pneumoniae 342 and virulence predictions verified in mice.</title>
        <authorList>
            <person name="Fouts D.E."/>
            <person name="Tyler H.L."/>
            <person name="DeBoy R.T."/>
            <person name="Daugherty S."/>
            <person name="Ren Q."/>
            <person name="Badger J.H."/>
            <person name="Durkin A.S."/>
            <person name="Huot H."/>
            <person name="Shrivastava S."/>
            <person name="Kothari S."/>
            <person name="Dodson R.J."/>
            <person name="Mohamoud Y."/>
            <person name="Khouri H."/>
            <person name="Roesch L.F.W."/>
            <person name="Krogfelt K.A."/>
            <person name="Struve C."/>
            <person name="Triplett E.W."/>
            <person name="Methe B.A."/>
        </authorList>
    </citation>
    <scope>NUCLEOTIDE SEQUENCE [LARGE SCALE GENOMIC DNA]</scope>
    <source>
        <strain>342</strain>
    </source>
</reference>
<protein>
    <recommendedName>
        <fullName evidence="1">Small ribosomal subunit protein bS18</fullName>
    </recommendedName>
    <alternativeName>
        <fullName evidence="2">30S ribosomal protein S18</fullName>
    </alternativeName>
</protein>
<dbReference type="EMBL" id="CP000964">
    <property type="protein sequence ID" value="ACI10462.1"/>
    <property type="molecule type" value="Genomic_DNA"/>
</dbReference>
<dbReference type="SMR" id="B5Y306"/>
<dbReference type="KEGG" id="kpe:KPK_5072"/>
<dbReference type="HOGENOM" id="CLU_148710_2_3_6"/>
<dbReference type="Proteomes" id="UP000001734">
    <property type="component" value="Chromosome"/>
</dbReference>
<dbReference type="GO" id="GO:0022627">
    <property type="term" value="C:cytosolic small ribosomal subunit"/>
    <property type="evidence" value="ECO:0007669"/>
    <property type="project" value="TreeGrafter"/>
</dbReference>
<dbReference type="GO" id="GO:0070181">
    <property type="term" value="F:small ribosomal subunit rRNA binding"/>
    <property type="evidence" value="ECO:0007669"/>
    <property type="project" value="TreeGrafter"/>
</dbReference>
<dbReference type="GO" id="GO:0003735">
    <property type="term" value="F:structural constituent of ribosome"/>
    <property type="evidence" value="ECO:0007669"/>
    <property type="project" value="InterPro"/>
</dbReference>
<dbReference type="GO" id="GO:0006412">
    <property type="term" value="P:translation"/>
    <property type="evidence" value="ECO:0007669"/>
    <property type="project" value="UniProtKB-UniRule"/>
</dbReference>
<dbReference type="FunFam" id="4.10.640.10:FF:000001">
    <property type="entry name" value="30S ribosomal protein S18"/>
    <property type="match status" value="1"/>
</dbReference>
<dbReference type="Gene3D" id="4.10.640.10">
    <property type="entry name" value="Ribosomal protein S18"/>
    <property type="match status" value="1"/>
</dbReference>
<dbReference type="HAMAP" id="MF_00270">
    <property type="entry name" value="Ribosomal_bS18"/>
    <property type="match status" value="1"/>
</dbReference>
<dbReference type="InterPro" id="IPR001648">
    <property type="entry name" value="Ribosomal_bS18"/>
</dbReference>
<dbReference type="InterPro" id="IPR018275">
    <property type="entry name" value="Ribosomal_bS18_CS"/>
</dbReference>
<dbReference type="InterPro" id="IPR036870">
    <property type="entry name" value="Ribosomal_bS18_sf"/>
</dbReference>
<dbReference type="NCBIfam" id="TIGR00165">
    <property type="entry name" value="S18"/>
    <property type="match status" value="1"/>
</dbReference>
<dbReference type="PANTHER" id="PTHR13479">
    <property type="entry name" value="30S RIBOSOMAL PROTEIN S18"/>
    <property type="match status" value="1"/>
</dbReference>
<dbReference type="PANTHER" id="PTHR13479:SF40">
    <property type="entry name" value="SMALL RIBOSOMAL SUBUNIT PROTEIN BS18M"/>
    <property type="match status" value="1"/>
</dbReference>
<dbReference type="Pfam" id="PF01084">
    <property type="entry name" value="Ribosomal_S18"/>
    <property type="match status" value="1"/>
</dbReference>
<dbReference type="PRINTS" id="PR00974">
    <property type="entry name" value="RIBOSOMALS18"/>
</dbReference>
<dbReference type="SUPFAM" id="SSF46911">
    <property type="entry name" value="Ribosomal protein S18"/>
    <property type="match status" value="1"/>
</dbReference>
<dbReference type="PROSITE" id="PS00057">
    <property type="entry name" value="RIBOSOMAL_S18"/>
    <property type="match status" value="1"/>
</dbReference>
<feature type="chain" id="PRO_1000114426" description="Small ribosomal subunit protein bS18">
    <location>
        <begin position="1"/>
        <end position="75"/>
    </location>
</feature>
<gene>
    <name evidence="1" type="primary">rpsR</name>
    <name type="ordered locus">KPK_5072</name>
</gene>
<sequence length="75" mass="8986">MARYFRRRKFCRFTAEGVQEIDYKDIATLKNYITESGKIVPSRITGTRAKYQRQLARAIKRARYLSLLPYTDRHQ</sequence>
<accession>B5Y306</accession>
<keyword id="KW-0687">Ribonucleoprotein</keyword>
<keyword id="KW-0689">Ribosomal protein</keyword>
<keyword id="KW-0694">RNA-binding</keyword>
<keyword id="KW-0699">rRNA-binding</keyword>
<comment type="function">
    <text evidence="1">Binds as a heterodimer with protein bS6 to the central domain of the 16S rRNA, where it helps stabilize the platform of the 30S subunit.</text>
</comment>
<comment type="subunit">
    <text evidence="1">Part of the 30S ribosomal subunit. Forms a tight heterodimer with protein bS6.</text>
</comment>
<comment type="similarity">
    <text evidence="1">Belongs to the bacterial ribosomal protein bS18 family.</text>
</comment>
<organism>
    <name type="scientific">Klebsiella pneumoniae (strain 342)</name>
    <dbReference type="NCBI Taxonomy" id="507522"/>
    <lineage>
        <taxon>Bacteria</taxon>
        <taxon>Pseudomonadati</taxon>
        <taxon>Pseudomonadota</taxon>
        <taxon>Gammaproteobacteria</taxon>
        <taxon>Enterobacterales</taxon>
        <taxon>Enterobacteriaceae</taxon>
        <taxon>Klebsiella/Raoultella group</taxon>
        <taxon>Klebsiella</taxon>
        <taxon>Klebsiella pneumoniae complex</taxon>
    </lineage>
</organism>
<name>RS18_KLEP3</name>